<dbReference type="EC" id="2.7.11.1"/>
<dbReference type="EMBL" id="AC011713">
    <property type="protein sequence ID" value="AAF14675.1"/>
    <property type="molecule type" value="Genomic_DNA"/>
</dbReference>
<dbReference type="EMBL" id="CP002684">
    <property type="protein sequence ID" value="AEE36462.1"/>
    <property type="molecule type" value="Genomic_DNA"/>
</dbReference>
<dbReference type="PIR" id="E96841">
    <property type="entry name" value="E96841"/>
</dbReference>
<dbReference type="RefSeq" id="NP_178202.1">
    <property type="nucleotide sequence ID" value="NM_106735.3"/>
</dbReference>
<dbReference type="SMR" id="Q9SAH3"/>
<dbReference type="FunCoup" id="Q9SAH3">
    <property type="interactions" value="1562"/>
</dbReference>
<dbReference type="STRING" id="3702.Q9SAH3"/>
<dbReference type="iPTMnet" id="Q9SAH3"/>
<dbReference type="PaxDb" id="3702-AT1G80870.1"/>
<dbReference type="ProteomicsDB" id="232387"/>
<dbReference type="EnsemblPlants" id="AT1G80870.1">
    <property type="protein sequence ID" value="AT1G80870.1"/>
    <property type="gene ID" value="AT1G80870"/>
</dbReference>
<dbReference type="GeneID" id="844427"/>
<dbReference type="Gramene" id="AT1G80870.1">
    <property type="protein sequence ID" value="AT1G80870.1"/>
    <property type="gene ID" value="AT1G80870"/>
</dbReference>
<dbReference type="KEGG" id="ath:AT1G80870"/>
<dbReference type="Araport" id="AT1G80870"/>
<dbReference type="TAIR" id="AT1G80870"/>
<dbReference type="eggNOG" id="KOG1187">
    <property type="taxonomic scope" value="Eukaryota"/>
</dbReference>
<dbReference type="HOGENOM" id="CLU_011728_0_0_1"/>
<dbReference type="InParanoid" id="Q9SAH3"/>
<dbReference type="OMA" id="GGGPCEH"/>
<dbReference type="PhylomeDB" id="Q9SAH3"/>
<dbReference type="PRO" id="PR:Q9SAH3"/>
<dbReference type="Proteomes" id="UP000006548">
    <property type="component" value="Chromosome 1"/>
</dbReference>
<dbReference type="ExpressionAtlas" id="Q9SAH3">
    <property type="expression patterns" value="baseline and differential"/>
</dbReference>
<dbReference type="GO" id="GO:0005886">
    <property type="term" value="C:plasma membrane"/>
    <property type="evidence" value="ECO:0007669"/>
    <property type="project" value="UniProtKB-SubCell"/>
</dbReference>
<dbReference type="GO" id="GO:0005524">
    <property type="term" value="F:ATP binding"/>
    <property type="evidence" value="ECO:0007669"/>
    <property type="project" value="UniProtKB-KW"/>
</dbReference>
<dbReference type="GO" id="GO:0106310">
    <property type="term" value="F:protein serine kinase activity"/>
    <property type="evidence" value="ECO:0007669"/>
    <property type="project" value="RHEA"/>
</dbReference>
<dbReference type="GO" id="GO:0004674">
    <property type="term" value="F:protein serine/threonine kinase activity"/>
    <property type="evidence" value="ECO:0007669"/>
    <property type="project" value="UniProtKB-KW"/>
</dbReference>
<dbReference type="FunFam" id="1.10.510.10:FF:001206">
    <property type="entry name" value="putative receptor-like protein kinase At1g80870"/>
    <property type="match status" value="1"/>
</dbReference>
<dbReference type="FunFam" id="1.10.510.10:FF:000780">
    <property type="entry name" value="Receptor-like serine/threonine-protein kinase At4g25390"/>
    <property type="match status" value="1"/>
</dbReference>
<dbReference type="FunFam" id="3.30.200.20:FF:000542">
    <property type="entry name" value="Receptor-like serine/threonine-protein kinase At4g25390"/>
    <property type="match status" value="1"/>
</dbReference>
<dbReference type="Gene3D" id="3.30.200.20">
    <property type="entry name" value="Phosphorylase Kinase, domain 1"/>
    <property type="match status" value="1"/>
</dbReference>
<dbReference type="Gene3D" id="1.10.510.10">
    <property type="entry name" value="Transferase(Phosphotransferase) domain 1"/>
    <property type="match status" value="2"/>
</dbReference>
<dbReference type="InterPro" id="IPR044576">
    <property type="entry name" value="At4g25390-like"/>
</dbReference>
<dbReference type="InterPro" id="IPR011009">
    <property type="entry name" value="Kinase-like_dom_sf"/>
</dbReference>
<dbReference type="InterPro" id="IPR000719">
    <property type="entry name" value="Prot_kinase_dom"/>
</dbReference>
<dbReference type="InterPro" id="IPR017441">
    <property type="entry name" value="Protein_kinase_ATP_BS"/>
</dbReference>
<dbReference type="InterPro" id="IPR008271">
    <property type="entry name" value="Ser/Thr_kinase_AS"/>
</dbReference>
<dbReference type="PANTHER" id="PTHR46821">
    <property type="entry name" value="OS07G0586332 PROTEIN"/>
    <property type="match status" value="1"/>
</dbReference>
<dbReference type="PANTHER" id="PTHR46821:SF4">
    <property type="entry name" value="OS08G0275200 PROTEIN"/>
    <property type="match status" value="1"/>
</dbReference>
<dbReference type="Pfam" id="PF00069">
    <property type="entry name" value="Pkinase"/>
    <property type="match status" value="1"/>
</dbReference>
<dbReference type="SMART" id="SM00220">
    <property type="entry name" value="S_TKc"/>
    <property type="match status" value="1"/>
</dbReference>
<dbReference type="SUPFAM" id="SSF56112">
    <property type="entry name" value="Protein kinase-like (PK-like)"/>
    <property type="match status" value="1"/>
</dbReference>
<dbReference type="PROSITE" id="PS00107">
    <property type="entry name" value="PROTEIN_KINASE_ATP"/>
    <property type="match status" value="1"/>
</dbReference>
<dbReference type="PROSITE" id="PS50011">
    <property type="entry name" value="PROTEIN_KINASE_DOM"/>
    <property type="match status" value="1"/>
</dbReference>
<dbReference type="PROSITE" id="PS00108">
    <property type="entry name" value="PROTEIN_KINASE_ST"/>
    <property type="match status" value="1"/>
</dbReference>
<keyword id="KW-0067">ATP-binding</keyword>
<keyword id="KW-1003">Cell membrane</keyword>
<keyword id="KW-0418">Kinase</keyword>
<keyword id="KW-0472">Membrane</keyword>
<keyword id="KW-0547">Nucleotide-binding</keyword>
<keyword id="KW-1185">Reference proteome</keyword>
<keyword id="KW-0723">Serine/threonine-protein kinase</keyword>
<keyword id="KW-0808">Transferase</keyword>
<keyword id="KW-0812">Transmembrane</keyword>
<keyword id="KW-1133">Transmembrane helix</keyword>
<sequence>MPSRPNPTRPKLFHNRTKTLFLILTISSSLVIFFAILYFIYHLWISLLNRSRTIPFDVAAASPLKLQLFTYKELKLATNDFDESNVIGKGGSGTVFRGITRDGKLFAVKRLDNLSIQTETEFQNELQILGGLKSSFLVTLLGYCVEKNHRFLIYEYMPNKSLQELLFNEDGDSCLNWERRFGIILDVAKALEFMHFGCDPPVIHGDIKPSNVLLDSEFRAKISDFGLSRVKVEGGYGVDLFSQELSGNFGGESTPQTAIGTPTHHEVDFALALQASSSSKNSRTSRNIKEMSLNSMSLAMDGETKGKEVSNDVVLSCEDHEFDQGKEMNLLSPNSVLDLGKGSKQWGRDWWWKQEGSGELCSKDYVREWIGSQIDTANPDWDDDKKVITTPELGVSTRTIDKAEHRDESGLNESRFDTLEEKFAKEEISERKNKRSKNKKKKHRNMEEWWKEEEHQEEMNNKKKIGVLRIKFKNHLKFPHFRYCFRQKGENSVHDREGEAAGEFSFRRGWRRKSNSSSKKKKKNNNGSMGSEMWSGDLFSRELSSTTSMRGTLCYIAPEYGGGCCYLMEKGDIYSFGVLILVIVSGRRPLHVLASPMKLEKANLVSWCRQLAQSGNVLELVDEKLKDGYNKEEAGLCINLALACLQKAPELRPDVSEVVRILRGEMDISSTAFEFSPSPPGKVYGSRSKRRS</sequence>
<comment type="catalytic activity">
    <reaction>
        <text>L-seryl-[protein] + ATP = O-phospho-L-seryl-[protein] + ADP + H(+)</text>
        <dbReference type="Rhea" id="RHEA:17989"/>
        <dbReference type="Rhea" id="RHEA-COMP:9863"/>
        <dbReference type="Rhea" id="RHEA-COMP:11604"/>
        <dbReference type="ChEBI" id="CHEBI:15378"/>
        <dbReference type="ChEBI" id="CHEBI:29999"/>
        <dbReference type="ChEBI" id="CHEBI:30616"/>
        <dbReference type="ChEBI" id="CHEBI:83421"/>
        <dbReference type="ChEBI" id="CHEBI:456216"/>
        <dbReference type="EC" id="2.7.11.1"/>
    </reaction>
</comment>
<comment type="catalytic activity">
    <reaction>
        <text>L-threonyl-[protein] + ATP = O-phospho-L-threonyl-[protein] + ADP + H(+)</text>
        <dbReference type="Rhea" id="RHEA:46608"/>
        <dbReference type="Rhea" id="RHEA-COMP:11060"/>
        <dbReference type="Rhea" id="RHEA-COMP:11605"/>
        <dbReference type="ChEBI" id="CHEBI:15378"/>
        <dbReference type="ChEBI" id="CHEBI:30013"/>
        <dbReference type="ChEBI" id="CHEBI:30616"/>
        <dbReference type="ChEBI" id="CHEBI:61977"/>
        <dbReference type="ChEBI" id="CHEBI:456216"/>
        <dbReference type="EC" id="2.7.11.1"/>
    </reaction>
</comment>
<comment type="subcellular location">
    <subcellularLocation>
        <location evidence="1">Cell membrane</location>
        <topology evidence="1">Single-pass membrane protein</topology>
    </subcellularLocation>
</comment>
<comment type="similarity">
    <text evidence="3">Belongs to the protein kinase superfamily. Ser/Thr protein kinase family.</text>
</comment>
<proteinExistence type="inferred from homology"/>
<reference key="1">
    <citation type="journal article" date="2000" name="Nature">
        <title>Sequence and analysis of chromosome 1 of the plant Arabidopsis thaliana.</title>
        <authorList>
            <person name="Theologis A."/>
            <person name="Ecker J.R."/>
            <person name="Palm C.J."/>
            <person name="Federspiel N.A."/>
            <person name="Kaul S."/>
            <person name="White O."/>
            <person name="Alonso J."/>
            <person name="Altafi H."/>
            <person name="Araujo R."/>
            <person name="Bowman C.L."/>
            <person name="Brooks S.Y."/>
            <person name="Buehler E."/>
            <person name="Chan A."/>
            <person name="Chao Q."/>
            <person name="Chen H."/>
            <person name="Cheuk R.F."/>
            <person name="Chin C.W."/>
            <person name="Chung M.K."/>
            <person name="Conn L."/>
            <person name="Conway A.B."/>
            <person name="Conway A.R."/>
            <person name="Creasy T.H."/>
            <person name="Dewar K."/>
            <person name="Dunn P."/>
            <person name="Etgu P."/>
            <person name="Feldblyum T.V."/>
            <person name="Feng J.-D."/>
            <person name="Fong B."/>
            <person name="Fujii C.Y."/>
            <person name="Gill J.E."/>
            <person name="Goldsmith A.D."/>
            <person name="Haas B."/>
            <person name="Hansen N.F."/>
            <person name="Hughes B."/>
            <person name="Huizar L."/>
            <person name="Hunter J.L."/>
            <person name="Jenkins J."/>
            <person name="Johnson-Hopson C."/>
            <person name="Khan S."/>
            <person name="Khaykin E."/>
            <person name="Kim C.J."/>
            <person name="Koo H.L."/>
            <person name="Kremenetskaia I."/>
            <person name="Kurtz D.B."/>
            <person name="Kwan A."/>
            <person name="Lam B."/>
            <person name="Langin-Hooper S."/>
            <person name="Lee A."/>
            <person name="Lee J.M."/>
            <person name="Lenz C.A."/>
            <person name="Li J.H."/>
            <person name="Li Y.-P."/>
            <person name="Lin X."/>
            <person name="Liu S.X."/>
            <person name="Liu Z.A."/>
            <person name="Luros J.S."/>
            <person name="Maiti R."/>
            <person name="Marziali A."/>
            <person name="Militscher J."/>
            <person name="Miranda M."/>
            <person name="Nguyen M."/>
            <person name="Nierman W.C."/>
            <person name="Osborne B.I."/>
            <person name="Pai G."/>
            <person name="Peterson J."/>
            <person name="Pham P.K."/>
            <person name="Rizzo M."/>
            <person name="Rooney T."/>
            <person name="Rowley D."/>
            <person name="Sakano H."/>
            <person name="Salzberg S.L."/>
            <person name="Schwartz J.R."/>
            <person name="Shinn P."/>
            <person name="Southwick A.M."/>
            <person name="Sun H."/>
            <person name="Tallon L.J."/>
            <person name="Tambunga G."/>
            <person name="Toriumi M.J."/>
            <person name="Town C.D."/>
            <person name="Utterback T."/>
            <person name="Van Aken S."/>
            <person name="Vaysberg M."/>
            <person name="Vysotskaia V.S."/>
            <person name="Walker M."/>
            <person name="Wu D."/>
            <person name="Yu G."/>
            <person name="Fraser C.M."/>
            <person name="Venter J.C."/>
            <person name="Davis R.W."/>
        </authorList>
    </citation>
    <scope>NUCLEOTIDE SEQUENCE [LARGE SCALE GENOMIC DNA]</scope>
    <source>
        <strain>cv. Columbia</strain>
    </source>
</reference>
<reference key="2">
    <citation type="journal article" date="2017" name="Plant J.">
        <title>Araport11: a complete reannotation of the Arabidopsis thaliana reference genome.</title>
        <authorList>
            <person name="Cheng C.Y."/>
            <person name="Krishnakumar V."/>
            <person name="Chan A.P."/>
            <person name="Thibaud-Nissen F."/>
            <person name="Schobel S."/>
            <person name="Town C.D."/>
        </authorList>
    </citation>
    <scope>GENOME REANNOTATION</scope>
    <source>
        <strain>cv. Columbia</strain>
    </source>
</reference>
<feature type="chain" id="PRO_0000401352" description="Putative receptor-like protein kinase At1g80870">
    <location>
        <begin position="1"/>
        <end position="692"/>
    </location>
</feature>
<feature type="transmembrane region" description="Helical" evidence="2">
    <location>
        <begin position="20"/>
        <end position="40"/>
    </location>
</feature>
<feature type="domain" description="Protein kinase" evidence="3">
    <location>
        <begin position="81"/>
        <end position="673"/>
    </location>
</feature>
<feature type="region of interest" description="Disordered" evidence="5">
    <location>
        <begin position="427"/>
        <end position="446"/>
    </location>
</feature>
<feature type="region of interest" description="Disordered" evidence="5">
    <location>
        <begin position="511"/>
        <end position="533"/>
    </location>
</feature>
<feature type="compositionally biased region" description="Basic residues" evidence="5">
    <location>
        <begin position="432"/>
        <end position="444"/>
    </location>
</feature>
<feature type="compositionally biased region" description="Basic residues" evidence="5">
    <location>
        <begin position="511"/>
        <end position="524"/>
    </location>
</feature>
<feature type="active site" description="Proton acceptor" evidence="3 4">
    <location>
        <position position="206"/>
    </location>
</feature>
<feature type="binding site" evidence="3">
    <location>
        <begin position="87"/>
        <end position="95"/>
    </location>
    <ligand>
        <name>ATP</name>
        <dbReference type="ChEBI" id="CHEBI:30616"/>
    </ligand>
</feature>
<feature type="binding site" evidence="3">
    <location>
        <position position="109"/>
    </location>
    <ligand>
        <name>ATP</name>
        <dbReference type="ChEBI" id="CHEBI:30616"/>
    </ligand>
</feature>
<organism>
    <name type="scientific">Arabidopsis thaliana</name>
    <name type="common">Mouse-ear cress</name>
    <dbReference type="NCBI Taxonomy" id="3702"/>
    <lineage>
        <taxon>Eukaryota</taxon>
        <taxon>Viridiplantae</taxon>
        <taxon>Streptophyta</taxon>
        <taxon>Embryophyta</taxon>
        <taxon>Tracheophyta</taxon>
        <taxon>Spermatophyta</taxon>
        <taxon>Magnoliopsida</taxon>
        <taxon>eudicotyledons</taxon>
        <taxon>Gunneridae</taxon>
        <taxon>Pentapetalae</taxon>
        <taxon>rosids</taxon>
        <taxon>malvids</taxon>
        <taxon>Brassicales</taxon>
        <taxon>Brassicaceae</taxon>
        <taxon>Camelineae</taxon>
        <taxon>Arabidopsis</taxon>
    </lineage>
</organism>
<accession>Q9SAH3</accession>
<gene>
    <name type="ordered locus">At1g80870</name>
    <name type="ORF">F23A5.23</name>
</gene>
<evidence type="ECO:0000250" key="1"/>
<evidence type="ECO:0000255" key="2"/>
<evidence type="ECO:0000255" key="3">
    <source>
        <dbReference type="PROSITE-ProRule" id="PRU00159"/>
    </source>
</evidence>
<evidence type="ECO:0000255" key="4">
    <source>
        <dbReference type="PROSITE-ProRule" id="PRU10027"/>
    </source>
</evidence>
<evidence type="ECO:0000256" key="5">
    <source>
        <dbReference type="SAM" id="MobiDB-lite"/>
    </source>
</evidence>
<protein>
    <recommendedName>
        <fullName>Putative receptor-like protein kinase At1g80870</fullName>
        <ecNumber>2.7.11.1</ecNumber>
    </recommendedName>
</protein>
<name>Y1887_ARATH</name>